<evidence type="ECO:0000255" key="1">
    <source>
        <dbReference type="HAMAP-Rule" id="MF_00213"/>
    </source>
</evidence>
<protein>
    <recommendedName>
        <fullName evidence="1">Hydrogenase maturation factor HypA</fullName>
    </recommendedName>
</protein>
<gene>
    <name evidence="1" type="primary">hypA</name>
    <name type="ordered locus">DehaBAV1_1238</name>
</gene>
<dbReference type="EMBL" id="CP000688">
    <property type="protein sequence ID" value="ABQ17817.1"/>
    <property type="molecule type" value="Genomic_DNA"/>
</dbReference>
<dbReference type="SMR" id="A5FPQ5"/>
<dbReference type="KEGG" id="deb:DehaBAV1_1238"/>
<dbReference type="PATRIC" id="fig|216389.18.peg.1307"/>
<dbReference type="HOGENOM" id="CLU_126929_4_0_0"/>
<dbReference type="GO" id="GO:0016151">
    <property type="term" value="F:nickel cation binding"/>
    <property type="evidence" value="ECO:0007669"/>
    <property type="project" value="UniProtKB-UniRule"/>
</dbReference>
<dbReference type="GO" id="GO:0008270">
    <property type="term" value="F:zinc ion binding"/>
    <property type="evidence" value="ECO:0007669"/>
    <property type="project" value="UniProtKB-UniRule"/>
</dbReference>
<dbReference type="GO" id="GO:0051604">
    <property type="term" value="P:protein maturation"/>
    <property type="evidence" value="ECO:0007669"/>
    <property type="project" value="InterPro"/>
</dbReference>
<dbReference type="GO" id="GO:0036211">
    <property type="term" value="P:protein modification process"/>
    <property type="evidence" value="ECO:0007669"/>
    <property type="project" value="UniProtKB-UniRule"/>
</dbReference>
<dbReference type="Gene3D" id="3.30.2320.80">
    <property type="match status" value="1"/>
</dbReference>
<dbReference type="HAMAP" id="MF_00213">
    <property type="entry name" value="HypA_HybF"/>
    <property type="match status" value="1"/>
</dbReference>
<dbReference type="InterPro" id="IPR020538">
    <property type="entry name" value="Hydgase_Ni_incorp_HypA/HybF_CS"/>
</dbReference>
<dbReference type="InterPro" id="IPR000688">
    <property type="entry name" value="HypA/HybF"/>
</dbReference>
<dbReference type="NCBIfam" id="TIGR00100">
    <property type="entry name" value="hypA"/>
    <property type="match status" value="1"/>
</dbReference>
<dbReference type="PANTHER" id="PTHR34535">
    <property type="entry name" value="HYDROGENASE MATURATION FACTOR HYPA"/>
    <property type="match status" value="1"/>
</dbReference>
<dbReference type="PANTHER" id="PTHR34535:SF3">
    <property type="entry name" value="HYDROGENASE MATURATION FACTOR HYPA"/>
    <property type="match status" value="1"/>
</dbReference>
<dbReference type="Pfam" id="PF01155">
    <property type="entry name" value="HypA"/>
    <property type="match status" value="1"/>
</dbReference>
<dbReference type="PIRSF" id="PIRSF004761">
    <property type="entry name" value="Hydrgn_mat_HypA"/>
    <property type="match status" value="1"/>
</dbReference>
<dbReference type="PROSITE" id="PS01249">
    <property type="entry name" value="HYPA"/>
    <property type="match status" value="1"/>
</dbReference>
<comment type="function">
    <text evidence="1">Involved in the maturation of [NiFe] hydrogenases. Required for nickel insertion into the metal center of the hydrogenase.</text>
</comment>
<comment type="similarity">
    <text evidence="1">Belongs to the HypA/HybF family.</text>
</comment>
<feature type="chain" id="PRO_1000078037" description="Hydrogenase maturation factor HypA">
    <location>
        <begin position="1"/>
        <end position="119"/>
    </location>
</feature>
<feature type="binding site" evidence="1">
    <location>
        <position position="2"/>
    </location>
    <ligand>
        <name>Ni(2+)</name>
        <dbReference type="ChEBI" id="CHEBI:49786"/>
    </ligand>
</feature>
<feature type="binding site" evidence="1">
    <location>
        <position position="73"/>
    </location>
    <ligand>
        <name>Zn(2+)</name>
        <dbReference type="ChEBI" id="CHEBI:29105"/>
    </ligand>
</feature>
<feature type="binding site" evidence="1">
    <location>
        <position position="76"/>
    </location>
    <ligand>
        <name>Zn(2+)</name>
        <dbReference type="ChEBI" id="CHEBI:29105"/>
    </ligand>
</feature>
<feature type="binding site" evidence="1">
    <location>
        <position position="89"/>
    </location>
    <ligand>
        <name>Zn(2+)</name>
        <dbReference type="ChEBI" id="CHEBI:29105"/>
    </ligand>
</feature>
<feature type="binding site" evidence="1">
    <location>
        <position position="92"/>
    </location>
    <ligand>
        <name>Zn(2+)</name>
        <dbReference type="ChEBI" id="CHEBI:29105"/>
    </ligand>
</feature>
<organism>
    <name type="scientific">Dehalococcoides mccartyi (strain ATCC BAA-2100 / JCM 16839 / KCTC 5957 / BAV1)</name>
    <dbReference type="NCBI Taxonomy" id="216389"/>
    <lineage>
        <taxon>Bacteria</taxon>
        <taxon>Bacillati</taxon>
        <taxon>Chloroflexota</taxon>
        <taxon>Dehalococcoidia</taxon>
        <taxon>Dehalococcoidales</taxon>
        <taxon>Dehalococcoidaceae</taxon>
        <taxon>Dehalococcoides</taxon>
    </lineage>
</organism>
<accession>A5FPQ5</accession>
<sequence>MHELSITEELLKTIVAKAEEAKARNVSRINLVIGEYAGVVEDSVKMCFEILSQDTIANGAILEFSRIPAKFRCRLCGHTFPSGQNLLVCPECQGWNAEVIAGNEFFIESIEVDDESQSS</sequence>
<name>HYPA_DEHMB</name>
<proteinExistence type="inferred from homology"/>
<keyword id="KW-0479">Metal-binding</keyword>
<keyword id="KW-0533">Nickel</keyword>
<keyword id="KW-0862">Zinc</keyword>
<reference key="1">
    <citation type="submission" date="2007-05" db="EMBL/GenBank/DDBJ databases">
        <title>Complete sequence of Dehalococcoides sp. BAV1.</title>
        <authorList>
            <consortium name="US DOE Joint Genome Institute"/>
            <person name="Copeland A."/>
            <person name="Lucas S."/>
            <person name="Lapidus A."/>
            <person name="Barry K."/>
            <person name="Detter J.C."/>
            <person name="Glavina del Rio T."/>
            <person name="Hammon N."/>
            <person name="Israni S."/>
            <person name="Pitluck S."/>
            <person name="Lowry S."/>
            <person name="Clum A."/>
            <person name="Schmutz J."/>
            <person name="Larimer F."/>
            <person name="Land M."/>
            <person name="Hauser L."/>
            <person name="Kyrpides N."/>
            <person name="Kim E."/>
            <person name="Ritalahti K.M."/>
            <person name="Loeffler F."/>
            <person name="Richardson P."/>
        </authorList>
    </citation>
    <scope>NUCLEOTIDE SEQUENCE [LARGE SCALE GENOMIC DNA]</scope>
    <source>
        <strain>ATCC BAA-2100 / JCM 16839 / KCTC 5957 / BAV1</strain>
    </source>
</reference>